<keyword id="KW-0997">Cell inner membrane</keyword>
<keyword id="KW-1003">Cell membrane</keyword>
<keyword id="KW-0407">Ion channel</keyword>
<keyword id="KW-0406">Ion transport</keyword>
<keyword id="KW-0472">Membrane</keyword>
<keyword id="KW-0479">Metal-binding</keyword>
<keyword id="KW-1185">Reference proteome</keyword>
<keyword id="KW-0915">Sodium</keyword>
<keyword id="KW-0812">Transmembrane</keyword>
<keyword id="KW-1133">Transmembrane helix</keyword>
<keyword id="KW-0813">Transport</keyword>
<accession>Q1LLY6</accession>
<proteinExistence type="inferred from homology"/>
<organism>
    <name type="scientific">Cupriavidus metallidurans (strain ATCC 43123 / DSM 2839 / NBRC 102507 / CH34)</name>
    <name type="common">Ralstonia metallidurans</name>
    <dbReference type="NCBI Taxonomy" id="266264"/>
    <lineage>
        <taxon>Bacteria</taxon>
        <taxon>Pseudomonadati</taxon>
        <taxon>Pseudomonadota</taxon>
        <taxon>Betaproteobacteria</taxon>
        <taxon>Burkholderiales</taxon>
        <taxon>Burkholderiaceae</taxon>
        <taxon>Cupriavidus</taxon>
    </lineage>
</organism>
<name>FLUC_CUPMC</name>
<gene>
    <name evidence="1" type="primary">fluC</name>
    <name evidence="1" type="synonym">crcB</name>
    <name type="ordered locus">Rmet_1961</name>
</gene>
<dbReference type="EMBL" id="CP000352">
    <property type="protein sequence ID" value="ABF08840.1"/>
    <property type="molecule type" value="Genomic_DNA"/>
</dbReference>
<dbReference type="RefSeq" id="WP_008645434.1">
    <property type="nucleotide sequence ID" value="NC_007973.1"/>
</dbReference>
<dbReference type="SMR" id="Q1LLY6"/>
<dbReference type="STRING" id="266264.Rmet_1961"/>
<dbReference type="GeneID" id="60821433"/>
<dbReference type="KEGG" id="rme:Rmet_1961"/>
<dbReference type="eggNOG" id="COG0239">
    <property type="taxonomic scope" value="Bacteria"/>
</dbReference>
<dbReference type="HOGENOM" id="CLU_114342_3_3_4"/>
<dbReference type="Proteomes" id="UP000002429">
    <property type="component" value="Chromosome"/>
</dbReference>
<dbReference type="GO" id="GO:0005886">
    <property type="term" value="C:plasma membrane"/>
    <property type="evidence" value="ECO:0007669"/>
    <property type="project" value="UniProtKB-SubCell"/>
</dbReference>
<dbReference type="GO" id="GO:0062054">
    <property type="term" value="F:fluoride channel activity"/>
    <property type="evidence" value="ECO:0007669"/>
    <property type="project" value="UniProtKB-UniRule"/>
</dbReference>
<dbReference type="GO" id="GO:0046872">
    <property type="term" value="F:metal ion binding"/>
    <property type="evidence" value="ECO:0007669"/>
    <property type="project" value="UniProtKB-KW"/>
</dbReference>
<dbReference type="GO" id="GO:0140114">
    <property type="term" value="P:cellular detoxification of fluoride"/>
    <property type="evidence" value="ECO:0007669"/>
    <property type="project" value="UniProtKB-UniRule"/>
</dbReference>
<dbReference type="HAMAP" id="MF_00454">
    <property type="entry name" value="FluC"/>
    <property type="match status" value="1"/>
</dbReference>
<dbReference type="InterPro" id="IPR003691">
    <property type="entry name" value="FluC"/>
</dbReference>
<dbReference type="NCBIfam" id="TIGR00494">
    <property type="entry name" value="crcB"/>
    <property type="match status" value="1"/>
</dbReference>
<dbReference type="NCBIfam" id="NF010792">
    <property type="entry name" value="PRK14196.1"/>
    <property type="match status" value="1"/>
</dbReference>
<dbReference type="PANTHER" id="PTHR28259">
    <property type="entry name" value="FLUORIDE EXPORT PROTEIN 1-RELATED"/>
    <property type="match status" value="1"/>
</dbReference>
<dbReference type="PANTHER" id="PTHR28259:SF1">
    <property type="entry name" value="FLUORIDE EXPORT PROTEIN 1-RELATED"/>
    <property type="match status" value="1"/>
</dbReference>
<dbReference type="Pfam" id="PF02537">
    <property type="entry name" value="CRCB"/>
    <property type="match status" value="1"/>
</dbReference>
<reference key="1">
    <citation type="journal article" date="2010" name="PLoS ONE">
        <title>The complete genome sequence of Cupriavidus metallidurans strain CH34, a master survivalist in harsh and anthropogenic environments.</title>
        <authorList>
            <person name="Janssen P.J."/>
            <person name="Van Houdt R."/>
            <person name="Moors H."/>
            <person name="Monsieurs P."/>
            <person name="Morin N."/>
            <person name="Michaux A."/>
            <person name="Benotmane M.A."/>
            <person name="Leys N."/>
            <person name="Vallaeys T."/>
            <person name="Lapidus A."/>
            <person name="Monchy S."/>
            <person name="Medigue C."/>
            <person name="Taghavi S."/>
            <person name="McCorkle S."/>
            <person name="Dunn J."/>
            <person name="van der Lelie D."/>
            <person name="Mergeay M."/>
        </authorList>
    </citation>
    <scope>NUCLEOTIDE SEQUENCE [LARGE SCALE GENOMIC DNA]</scope>
    <source>
        <strain>ATCC 43123 / DSM 2839 / NBRC 102507 / CH34</strain>
    </source>
</reference>
<protein>
    <recommendedName>
        <fullName evidence="1">Fluoride-specific ion channel FluC</fullName>
    </recommendedName>
</protein>
<feature type="chain" id="PRO_0000252921" description="Fluoride-specific ion channel FluC">
    <location>
        <begin position="1"/>
        <end position="126"/>
    </location>
</feature>
<feature type="transmembrane region" description="Helical" evidence="1">
    <location>
        <begin position="5"/>
        <end position="25"/>
    </location>
</feature>
<feature type="transmembrane region" description="Helical" evidence="1">
    <location>
        <begin position="36"/>
        <end position="56"/>
    </location>
</feature>
<feature type="transmembrane region" description="Helical" evidence="1">
    <location>
        <begin position="69"/>
        <end position="89"/>
    </location>
</feature>
<feature type="transmembrane region" description="Helical" evidence="1">
    <location>
        <begin position="99"/>
        <end position="119"/>
    </location>
</feature>
<feature type="binding site" evidence="1">
    <location>
        <position position="76"/>
    </location>
    <ligand>
        <name>Na(+)</name>
        <dbReference type="ChEBI" id="CHEBI:29101"/>
        <note>structural</note>
    </ligand>
</feature>
<feature type="binding site" evidence="1">
    <location>
        <position position="79"/>
    </location>
    <ligand>
        <name>Na(+)</name>
        <dbReference type="ChEBI" id="CHEBI:29101"/>
        <note>structural</note>
    </ligand>
</feature>
<evidence type="ECO:0000255" key="1">
    <source>
        <dbReference type="HAMAP-Rule" id="MF_00454"/>
    </source>
</evidence>
<sequence length="126" mass="13468">MGPMGFVAVGVGAAVGAWLRWFFSVTWNAINPALPYGTLASNLVGGYLIGLAVAFFETHPSLPPEWRLLAVTGFLGGLTTFSTFSSEVIANLMAGDYRWAMLHLAMHLGGSLLLTAFGIWSYRALA</sequence>
<comment type="function">
    <text evidence="1">Fluoride-specific ion channel. Important for reducing fluoride concentration in the cell, thus reducing its toxicity.</text>
</comment>
<comment type="catalytic activity">
    <reaction evidence="1">
        <text>fluoride(in) = fluoride(out)</text>
        <dbReference type="Rhea" id="RHEA:76159"/>
        <dbReference type="ChEBI" id="CHEBI:17051"/>
    </reaction>
    <physiologicalReaction direction="left-to-right" evidence="1">
        <dbReference type="Rhea" id="RHEA:76160"/>
    </physiologicalReaction>
</comment>
<comment type="activity regulation">
    <text evidence="1">Na(+) is not transported, but it plays an essential structural role and its presence is essential for fluoride channel function.</text>
</comment>
<comment type="subcellular location">
    <subcellularLocation>
        <location evidence="1">Cell inner membrane</location>
        <topology evidence="1">Multi-pass membrane protein</topology>
    </subcellularLocation>
</comment>
<comment type="similarity">
    <text evidence="1">Belongs to the fluoride channel Fluc/FEX (TC 1.A.43) family.</text>
</comment>